<dbReference type="EMBL" id="CP000776">
    <property type="protein sequence ID" value="ABS51594.1"/>
    <property type="molecule type" value="Genomic_DNA"/>
</dbReference>
<dbReference type="RefSeq" id="WP_012109192.1">
    <property type="nucleotide sequence ID" value="NC_009714.1"/>
</dbReference>
<dbReference type="SMR" id="A7I2Z8"/>
<dbReference type="STRING" id="360107.CHAB381_1340"/>
<dbReference type="KEGG" id="cha:CHAB381_1340"/>
<dbReference type="eggNOG" id="COG0261">
    <property type="taxonomic scope" value="Bacteria"/>
</dbReference>
<dbReference type="HOGENOM" id="CLU_061463_3_1_7"/>
<dbReference type="OrthoDB" id="9813334at2"/>
<dbReference type="Proteomes" id="UP000002407">
    <property type="component" value="Chromosome"/>
</dbReference>
<dbReference type="GO" id="GO:0005737">
    <property type="term" value="C:cytoplasm"/>
    <property type="evidence" value="ECO:0007669"/>
    <property type="project" value="UniProtKB-ARBA"/>
</dbReference>
<dbReference type="GO" id="GO:1990904">
    <property type="term" value="C:ribonucleoprotein complex"/>
    <property type="evidence" value="ECO:0007669"/>
    <property type="project" value="UniProtKB-KW"/>
</dbReference>
<dbReference type="GO" id="GO:0005840">
    <property type="term" value="C:ribosome"/>
    <property type="evidence" value="ECO:0007669"/>
    <property type="project" value="UniProtKB-KW"/>
</dbReference>
<dbReference type="GO" id="GO:0019843">
    <property type="term" value="F:rRNA binding"/>
    <property type="evidence" value="ECO:0007669"/>
    <property type="project" value="UniProtKB-UniRule"/>
</dbReference>
<dbReference type="GO" id="GO:0003735">
    <property type="term" value="F:structural constituent of ribosome"/>
    <property type="evidence" value="ECO:0007669"/>
    <property type="project" value="InterPro"/>
</dbReference>
<dbReference type="GO" id="GO:0006412">
    <property type="term" value="P:translation"/>
    <property type="evidence" value="ECO:0007669"/>
    <property type="project" value="UniProtKB-UniRule"/>
</dbReference>
<dbReference type="HAMAP" id="MF_01363">
    <property type="entry name" value="Ribosomal_bL21"/>
    <property type="match status" value="1"/>
</dbReference>
<dbReference type="InterPro" id="IPR028909">
    <property type="entry name" value="bL21-like"/>
</dbReference>
<dbReference type="InterPro" id="IPR036164">
    <property type="entry name" value="bL21-like_sf"/>
</dbReference>
<dbReference type="InterPro" id="IPR001787">
    <property type="entry name" value="Ribosomal_bL21"/>
</dbReference>
<dbReference type="InterPro" id="IPR018258">
    <property type="entry name" value="Ribosomal_bL21_CS"/>
</dbReference>
<dbReference type="NCBIfam" id="TIGR00061">
    <property type="entry name" value="L21"/>
    <property type="match status" value="1"/>
</dbReference>
<dbReference type="PANTHER" id="PTHR21349">
    <property type="entry name" value="50S RIBOSOMAL PROTEIN L21"/>
    <property type="match status" value="1"/>
</dbReference>
<dbReference type="PANTHER" id="PTHR21349:SF0">
    <property type="entry name" value="LARGE RIBOSOMAL SUBUNIT PROTEIN BL21M"/>
    <property type="match status" value="1"/>
</dbReference>
<dbReference type="Pfam" id="PF00829">
    <property type="entry name" value="Ribosomal_L21p"/>
    <property type="match status" value="1"/>
</dbReference>
<dbReference type="SUPFAM" id="SSF141091">
    <property type="entry name" value="L21p-like"/>
    <property type="match status" value="1"/>
</dbReference>
<dbReference type="PROSITE" id="PS01169">
    <property type="entry name" value="RIBOSOMAL_L21"/>
    <property type="match status" value="1"/>
</dbReference>
<name>RL21_CAMHC</name>
<accession>A7I2Z8</accession>
<organism>
    <name type="scientific">Campylobacter hominis (strain ATCC BAA-381 / DSM 21671 / CCUG 45161 / LMG 19568 / NCTC 13146 / CH001A)</name>
    <dbReference type="NCBI Taxonomy" id="360107"/>
    <lineage>
        <taxon>Bacteria</taxon>
        <taxon>Pseudomonadati</taxon>
        <taxon>Campylobacterota</taxon>
        <taxon>Epsilonproteobacteria</taxon>
        <taxon>Campylobacterales</taxon>
        <taxon>Campylobacteraceae</taxon>
        <taxon>Campylobacter</taxon>
    </lineage>
</organism>
<feature type="chain" id="PRO_1000067819" description="Large ribosomal subunit protein bL21">
    <location>
        <begin position="1"/>
        <end position="102"/>
    </location>
</feature>
<evidence type="ECO:0000255" key="1">
    <source>
        <dbReference type="HAMAP-Rule" id="MF_01363"/>
    </source>
</evidence>
<evidence type="ECO:0000305" key="2"/>
<proteinExistence type="inferred from homology"/>
<keyword id="KW-1185">Reference proteome</keyword>
<keyword id="KW-0687">Ribonucleoprotein</keyword>
<keyword id="KW-0689">Ribosomal protein</keyword>
<keyword id="KW-0694">RNA-binding</keyword>
<keyword id="KW-0699">rRNA-binding</keyword>
<sequence length="102" mass="11516">MYAIIKHSGKQYKVSEGDLLNLDHFAAEKKSIVEITDVLAINDGSLKVGAPFVEGAKVVLEVVNEGKDKKVVIFKKRRRKDSKQKRGFRRQYTRVKVTSIVA</sequence>
<gene>
    <name evidence="1" type="primary">rplU</name>
    <name type="ordered locus">CHAB381_1340</name>
</gene>
<protein>
    <recommendedName>
        <fullName evidence="1">Large ribosomal subunit protein bL21</fullName>
    </recommendedName>
    <alternativeName>
        <fullName evidence="2">50S ribosomal protein L21</fullName>
    </alternativeName>
</protein>
<comment type="function">
    <text evidence="1">This protein binds to 23S rRNA in the presence of protein L20.</text>
</comment>
<comment type="subunit">
    <text evidence="1">Part of the 50S ribosomal subunit. Contacts protein L20.</text>
</comment>
<comment type="similarity">
    <text evidence="1">Belongs to the bacterial ribosomal protein bL21 family.</text>
</comment>
<reference key="1">
    <citation type="submission" date="2007-07" db="EMBL/GenBank/DDBJ databases">
        <title>Complete genome sequence of Campylobacter hominis ATCC BAA-381, a commensal isolated from the human gastrointestinal tract.</title>
        <authorList>
            <person name="Fouts D.E."/>
            <person name="Mongodin E.F."/>
            <person name="Puiu D."/>
            <person name="Sebastian Y."/>
            <person name="Miller W.G."/>
            <person name="Mandrell R.E."/>
            <person name="Nelson K.E."/>
        </authorList>
    </citation>
    <scope>NUCLEOTIDE SEQUENCE [LARGE SCALE GENOMIC DNA]</scope>
    <source>
        <strain>ATCC BAA-381 / DSM 21671 / CCUG 45161 / LMG 19568 / NCTC 13146 / CH001A</strain>
    </source>
</reference>